<organism>
    <name type="scientific">Caenorhabditis elegans</name>
    <dbReference type="NCBI Taxonomy" id="6239"/>
    <lineage>
        <taxon>Eukaryota</taxon>
        <taxon>Metazoa</taxon>
        <taxon>Ecdysozoa</taxon>
        <taxon>Nematoda</taxon>
        <taxon>Chromadorea</taxon>
        <taxon>Rhabditida</taxon>
        <taxon>Rhabditina</taxon>
        <taxon>Rhabditomorpha</taxon>
        <taxon>Rhabditoidea</taxon>
        <taxon>Rhabditidae</taxon>
        <taxon>Peloderinae</taxon>
        <taxon>Caenorhabditis</taxon>
    </lineage>
</organism>
<proteinExistence type="inferred from homology"/>
<protein>
    <recommendedName>
        <fullName>MICOS complex subunit Mic10</fullName>
    </recommendedName>
</protein>
<sequence length="105" mass="11133">MAPGASAPAASRSEDEVGQKIDRCFADSLLKVTGGVAIGIVASVAFFKSRSWPIWFGSGVGLGTGWSNCRHDFASPYVLHGKRVPAGQDSQGKPAYNIITEQHKQ</sequence>
<comment type="function">
    <text evidence="1">Component of the MICOS complex, a large protein complex of the mitochondrial inner membrane that plays crucial roles in the maintenance of crista junctions, inner membrane architecture, and formation of contact sites to the outer membrane.</text>
</comment>
<comment type="subunit">
    <text evidence="1">Component of the mitochondrial contact site and cristae organizing system (MICOS) complex.</text>
</comment>
<comment type="subcellular location">
    <subcellularLocation>
        <location evidence="1">Mitochondrion inner membrane</location>
        <topology evidence="1">Single-pass membrane protein</topology>
    </subcellularLocation>
    <text evidence="1">The C-terminus is located in the intermembrane space, while the location of the N-terminus has not been determined yet. As some programs predict the presence of 2 closely apposed membrane domains, it has been proposed that the protein may cross the membrane twice and that both termini may face the intermembrane space (By similarity).</text>
</comment>
<comment type="similarity">
    <text evidence="4">Belongs to the MICOS complex subunit Mic10 family.</text>
</comment>
<evidence type="ECO:0000250" key="1"/>
<evidence type="ECO:0000255" key="2"/>
<evidence type="ECO:0000256" key="3">
    <source>
        <dbReference type="SAM" id="MobiDB-lite"/>
    </source>
</evidence>
<evidence type="ECO:0000305" key="4"/>
<accession>Q9N4K0</accession>
<keyword id="KW-0472">Membrane</keyword>
<keyword id="KW-0496">Mitochondrion</keyword>
<keyword id="KW-0999">Mitochondrion inner membrane</keyword>
<keyword id="KW-1185">Reference proteome</keyword>
<keyword id="KW-0812">Transmembrane</keyword>
<keyword id="KW-1133">Transmembrane helix</keyword>
<dbReference type="EMBL" id="FO081460">
    <property type="protein sequence ID" value="CCD71743.1"/>
    <property type="molecule type" value="Genomic_DNA"/>
</dbReference>
<dbReference type="RefSeq" id="NP_494216.1">
    <property type="nucleotide sequence ID" value="NM_061815.6"/>
</dbReference>
<dbReference type="BioGRID" id="38947">
    <property type="interactions" value="8"/>
</dbReference>
<dbReference type="FunCoup" id="Q9N4K0">
    <property type="interactions" value="912"/>
</dbReference>
<dbReference type="IntAct" id="Q9N4K0">
    <property type="interactions" value="1"/>
</dbReference>
<dbReference type="STRING" id="6239.F54A3.5.1"/>
<dbReference type="PaxDb" id="6239-F54A3.5"/>
<dbReference type="PeptideAtlas" id="Q9N4K0"/>
<dbReference type="EnsemblMetazoa" id="F54A3.5.1">
    <property type="protein sequence ID" value="F54A3.5.1"/>
    <property type="gene ID" value="WBGene00018784"/>
</dbReference>
<dbReference type="GeneID" id="173579"/>
<dbReference type="KEGG" id="cel:CELE_F54A3.5"/>
<dbReference type="UCSC" id="F54A3.5.1">
    <property type="organism name" value="c. elegans"/>
</dbReference>
<dbReference type="AGR" id="WB:WBGene00018784"/>
<dbReference type="CTD" id="173579"/>
<dbReference type="WormBase" id="F54A3.5">
    <property type="protein sequence ID" value="CE25901"/>
    <property type="gene ID" value="WBGene00018784"/>
</dbReference>
<dbReference type="eggNOG" id="KOG4604">
    <property type="taxonomic scope" value="Eukaryota"/>
</dbReference>
<dbReference type="GeneTree" id="ENSGT00940000168269"/>
<dbReference type="HOGENOM" id="CLU_068905_2_0_1"/>
<dbReference type="InParanoid" id="Q9N4K0"/>
<dbReference type="OMA" id="CLADCAI"/>
<dbReference type="OrthoDB" id="1916310at2759"/>
<dbReference type="PhylomeDB" id="Q9N4K0"/>
<dbReference type="PRO" id="PR:Q9N4K0"/>
<dbReference type="Proteomes" id="UP000001940">
    <property type="component" value="Chromosome II"/>
</dbReference>
<dbReference type="Bgee" id="WBGene00018784">
    <property type="expression patterns" value="Expressed in pharyngeal muscle cell (C elegans) and 4 other cell types or tissues"/>
</dbReference>
<dbReference type="GO" id="GO:0061617">
    <property type="term" value="C:MICOS complex"/>
    <property type="evidence" value="ECO:0007669"/>
    <property type="project" value="InterPro"/>
</dbReference>
<dbReference type="GO" id="GO:0005739">
    <property type="term" value="C:mitochondrion"/>
    <property type="evidence" value="ECO:0000318"/>
    <property type="project" value="GO_Central"/>
</dbReference>
<dbReference type="InterPro" id="IPR007512">
    <property type="entry name" value="Mic10"/>
</dbReference>
<dbReference type="PANTHER" id="PTHR21304">
    <property type="entry name" value="MICOS COMPLEX SUBUNIT MIC10"/>
    <property type="match status" value="1"/>
</dbReference>
<dbReference type="PANTHER" id="PTHR21304:SF0">
    <property type="entry name" value="MICOS COMPLEX SUBUNIT MIC10"/>
    <property type="match status" value="1"/>
</dbReference>
<dbReference type="Pfam" id="PF04418">
    <property type="entry name" value="DUF543"/>
    <property type="match status" value="1"/>
</dbReference>
<feature type="chain" id="PRO_0000221636" description="MICOS complex subunit Mic10">
    <location>
        <begin position="1"/>
        <end position="105"/>
    </location>
</feature>
<feature type="transmembrane region" description="Helical" evidence="2">
    <location>
        <begin position="29"/>
        <end position="46"/>
    </location>
</feature>
<feature type="topological domain" description="Mitochondrial intermembrane" evidence="2">
    <location>
        <begin position="47"/>
        <end position="105"/>
    </location>
</feature>
<feature type="region of interest" description="Disordered" evidence="3">
    <location>
        <begin position="85"/>
        <end position="105"/>
    </location>
</feature>
<reference key="1">
    <citation type="journal article" date="1998" name="Science">
        <title>Genome sequence of the nematode C. elegans: a platform for investigating biology.</title>
        <authorList>
            <consortium name="The C. elegans sequencing consortium"/>
        </authorList>
    </citation>
    <scope>NUCLEOTIDE SEQUENCE [LARGE SCALE GENOMIC DNA]</scope>
    <source>
        <strain>Bristol N2</strain>
    </source>
</reference>
<name>MIC10_CAEEL</name>
<gene>
    <name type="ORF">F54A3.5</name>
</gene>